<proteinExistence type="evidence at protein level"/>
<sequence length="245" mass="26147">MAMTLSTKAFAQRGVSARKNTVRVYAATTKVNPKLASKTEVERFKQATGLPAPAINGKQFPLKLGFTKTNELFVGRLAMVGFSASLIGEILTGKGALAQFGYETGLNGIEVDGLVIGLIAFNLIAAVLPTSQTFVPEEQDTISERPAGPLQDPRITLLEPKKFFGVQGFGFTKENELFVGRAAQLGFAFSLIGEAVTGKGALAQFDIETGLSLRDTEFGLVVFILFLLFAAINEGSGKFVDEESA</sequence>
<accession>A8HPM5</accession>
<comment type="function">
    <text evidence="2 3">Required for non-photochemical quenching (NPQ), a mechanism that converts and dissipates the harmful excess absorbed light energy into heat and protect the photosynthetic apparatus from photo-oxidative damage (PubMed:27329221, PubMed:27358399). Seems involved in the activation of NPQ, possibly by promoting conformational changes required for activation of LHCSR3-dependent quenching in the antenna of photosystem II (PSII) (PubMed:27329221, PubMed:27358399).</text>
</comment>
<comment type="subcellular location">
    <subcellularLocation>
        <location evidence="5">Plastid</location>
        <location evidence="5">Chloroplast thylakoid membrane</location>
        <topology evidence="1">Multi-pass membrane protein</topology>
    </subcellularLocation>
</comment>
<comment type="induction">
    <text evidence="2 3">Induced transiently by high light stress (at protein level).</text>
</comment>
<comment type="similarity">
    <text evidence="5">Belongs to the ELIP/psbS family.</text>
</comment>
<organism>
    <name type="scientific">Chlamydomonas reinhardtii</name>
    <name type="common">Chlamydomonas smithii</name>
    <dbReference type="NCBI Taxonomy" id="3055"/>
    <lineage>
        <taxon>Eukaryota</taxon>
        <taxon>Viridiplantae</taxon>
        <taxon>Chlorophyta</taxon>
        <taxon>core chlorophytes</taxon>
        <taxon>Chlorophyceae</taxon>
        <taxon>CS clade</taxon>
        <taxon>Chlamydomonadales</taxon>
        <taxon>Chlamydomonadaceae</taxon>
        <taxon>Chlamydomonas</taxon>
    </lineage>
</organism>
<name>PSBS2_CHLRE</name>
<protein>
    <recommendedName>
        <fullName evidence="5">Photosystem II protein PSBS2</fullName>
    </recommendedName>
    <alternativeName>
        <fullName evidence="5">Protein PHOTOSYSTEM II SUBUNIT S2</fullName>
    </alternativeName>
</protein>
<feature type="transit peptide" description="Chloroplast" evidence="1">
    <location>
        <begin position="1"/>
        <end position="25"/>
    </location>
</feature>
<feature type="chain" id="PRO_0000447659" description="Photosystem II protein PSBS2">
    <location>
        <begin position="26"/>
        <end position="245"/>
    </location>
</feature>
<feature type="transmembrane region" description="Helical" evidence="1">
    <location>
        <begin position="72"/>
        <end position="92"/>
    </location>
</feature>
<feature type="transmembrane region" description="Helical" evidence="1">
    <location>
        <begin position="108"/>
        <end position="128"/>
    </location>
</feature>
<feature type="transmembrane region" description="Helical" evidence="1">
    <location>
        <begin position="185"/>
        <end position="205"/>
    </location>
</feature>
<feature type="transmembrane region" description="Helical" evidence="1">
    <location>
        <begin position="217"/>
        <end position="237"/>
    </location>
</feature>
<gene>
    <name evidence="4" type="primary">PSBS2</name>
    <name evidence="7" type="ORF">CHLRE_01g016750v5</name>
    <name evidence="6" type="ORF">CHLREDRAFT_171516</name>
</gene>
<keyword id="KW-0150">Chloroplast</keyword>
<keyword id="KW-0472">Membrane</keyword>
<keyword id="KW-0602">Photosynthesis</keyword>
<keyword id="KW-0604">Photosystem II</keyword>
<keyword id="KW-0934">Plastid</keyword>
<keyword id="KW-1185">Reference proteome</keyword>
<keyword id="KW-0793">Thylakoid</keyword>
<keyword id="KW-0809">Transit peptide</keyword>
<keyword id="KW-0812">Transmembrane</keyword>
<keyword id="KW-1133">Transmembrane helix</keyword>
<reference key="1">
    <citation type="journal article" date="2007" name="Science">
        <title>The Chlamydomonas genome reveals the evolution of key animal and plant functions.</title>
        <authorList>
            <person name="Merchant S.S."/>
            <person name="Prochnik S.E."/>
            <person name="Vallon O."/>
            <person name="Harris E.H."/>
            <person name="Karpowicz S.J."/>
            <person name="Witman G.B."/>
            <person name="Terry A."/>
            <person name="Salamov A."/>
            <person name="Fritz-Laylin L.K."/>
            <person name="Marechal-Drouard L."/>
            <person name="Marshall W.F."/>
            <person name="Qu L.H."/>
            <person name="Nelson D.R."/>
            <person name="Sanderfoot A.A."/>
            <person name="Spalding M.H."/>
            <person name="Kapitonov V.V."/>
            <person name="Ren Q."/>
            <person name="Ferris P."/>
            <person name="Lindquist E."/>
            <person name="Shapiro H."/>
            <person name="Lucas S.M."/>
            <person name="Grimwood J."/>
            <person name="Schmutz J."/>
            <person name="Cardol P."/>
            <person name="Cerutti H."/>
            <person name="Chanfreau G."/>
            <person name="Chen C.L."/>
            <person name="Cognat V."/>
            <person name="Croft M.T."/>
            <person name="Dent R."/>
            <person name="Dutcher S."/>
            <person name="Fernandez E."/>
            <person name="Fukuzawa H."/>
            <person name="Gonzalez-Ballester D."/>
            <person name="Gonzalez-Halphen D."/>
            <person name="Hallmann A."/>
            <person name="Hanikenne M."/>
            <person name="Hippler M."/>
            <person name="Inwood W."/>
            <person name="Jabbari K."/>
            <person name="Kalanon M."/>
            <person name="Kuras R."/>
            <person name="Lefebvre P.A."/>
            <person name="Lemaire S.D."/>
            <person name="Lobanov A.V."/>
            <person name="Lohr M."/>
            <person name="Manuell A."/>
            <person name="Meier I."/>
            <person name="Mets L."/>
            <person name="Mittag M."/>
            <person name="Mittelmeier T."/>
            <person name="Moroney J.V."/>
            <person name="Moseley J."/>
            <person name="Napoli C."/>
            <person name="Nedelcu A.M."/>
            <person name="Niyogi K."/>
            <person name="Novoselov S.V."/>
            <person name="Paulsen I.T."/>
            <person name="Pazour G.J."/>
            <person name="Purton S."/>
            <person name="Ral J.P."/>
            <person name="Riano-Pachon D.M."/>
            <person name="Riekhof W."/>
            <person name="Rymarquis L."/>
            <person name="Schroda M."/>
            <person name="Stern D."/>
            <person name="Umen J."/>
            <person name="Willows R."/>
            <person name="Wilson N."/>
            <person name="Zimmer S.L."/>
            <person name="Allmer J."/>
            <person name="Balk J."/>
            <person name="Bisova K."/>
            <person name="Chen C.J."/>
            <person name="Elias M."/>
            <person name="Gendler K."/>
            <person name="Hauser C."/>
            <person name="Lamb M.R."/>
            <person name="Ledford H."/>
            <person name="Long J.C."/>
            <person name="Minagawa J."/>
            <person name="Page M.D."/>
            <person name="Pan J."/>
            <person name="Pootakham W."/>
            <person name="Roje S."/>
            <person name="Rose A."/>
            <person name="Stahlberg E."/>
            <person name="Terauchi A.M."/>
            <person name="Yang P."/>
            <person name="Ball S."/>
            <person name="Bowler C."/>
            <person name="Dieckmann C.L."/>
            <person name="Gladyshev V.N."/>
            <person name="Green P."/>
            <person name="Jorgensen R."/>
            <person name="Mayfield S."/>
            <person name="Mueller-Roeber B."/>
            <person name="Rajamani S."/>
            <person name="Sayre R.T."/>
            <person name="Brokstein P."/>
            <person name="Dubchak I."/>
            <person name="Goodstein D."/>
            <person name="Hornick L."/>
            <person name="Huang Y.W."/>
            <person name="Jhaveri J."/>
            <person name="Luo Y."/>
            <person name="Martinez D."/>
            <person name="Ngau W.C."/>
            <person name="Otillar B."/>
            <person name="Poliakov A."/>
            <person name="Porter A."/>
            <person name="Szajkowski L."/>
            <person name="Werner G."/>
            <person name="Zhou K."/>
            <person name="Grigoriev I.V."/>
            <person name="Rokhsar D.S."/>
            <person name="Grossman A.R."/>
        </authorList>
    </citation>
    <scope>NUCLEOTIDE SEQUENCE [LARGE SCALE GENOMIC DNA]</scope>
    <source>
        <strain>CC-503</strain>
    </source>
</reference>
<reference key="2">
    <citation type="submission" date="2017-07" db="EMBL/GenBank/DDBJ databases">
        <title>WGS assembly of Chlamydomonas reinhardtii.</title>
        <authorList>
            <consortium name="Chlamydomonas Annotation Team"/>
            <consortium name="JGI Annotation Team"/>
            <person name="Merchant S.S."/>
            <person name="Prochnik S.E."/>
            <person name="Vallon O."/>
            <person name="Harris E.H."/>
            <person name="Karpowicz S.J."/>
            <person name="Witman G.B."/>
            <person name="Terry A."/>
            <person name="Salamov A."/>
            <person name="Fritz-Laylin L.K."/>
            <person name="Marechal-Drouard L."/>
            <person name="Marshall W.F."/>
            <person name="Qu L.H."/>
            <person name="Nelson D.R."/>
            <person name="Sanderfoot A.A."/>
            <person name="Spalding M.H."/>
            <person name="Kapitonov V.V."/>
            <person name="Ren Q."/>
            <person name="Ferris P."/>
            <person name="Lindquist E."/>
            <person name="Shapiro H."/>
            <person name="Lucas S.M."/>
            <person name="Grimwood J."/>
            <person name="Schmutz J."/>
            <person name="Grigoriev I.V."/>
            <person name="Rokhsar D.S."/>
        </authorList>
    </citation>
    <scope>GENOME REANNOTATION</scope>
    <source>
        <strain>CC-503</strain>
    </source>
</reference>
<reference key="3">
    <citation type="journal article" date="2016" name="J. Biol. Chem.">
        <title>Photosystem II subunit PsbS is involved in the induction of LHCSR protein-dependent energy dissipation in Chlamydomonas reinhardtii.</title>
        <authorList>
            <person name="Correa-Galvis V."/>
            <person name="Redekop P."/>
            <person name="Guan K."/>
            <person name="Griess A."/>
            <person name="Truong T.B."/>
            <person name="Wakao S."/>
            <person name="Niyogi K.K."/>
            <person name="Jahns P."/>
        </authorList>
    </citation>
    <scope>FUNCTION</scope>
    <scope>INDUCTION BY HIGH LIGHT</scope>
</reference>
<reference key="4">
    <citation type="journal article" date="2016" name="Plant Physiol.">
        <title>Chlamydomonas reinhardtii PsbS protein is functional and accumulates rapidly and transiently under high light.</title>
        <authorList>
            <person name="Tibiletti T."/>
            <person name="Auroy P."/>
            <person name="Peltier G."/>
            <person name="Caffarri S."/>
        </authorList>
    </citation>
    <scope>FUNCTION</scope>
    <scope>INDUCTION BY HIGH LIGHT</scope>
</reference>
<evidence type="ECO:0000255" key="1"/>
<evidence type="ECO:0000269" key="2">
    <source>
    </source>
</evidence>
<evidence type="ECO:0000269" key="3">
    <source>
    </source>
</evidence>
<evidence type="ECO:0000303" key="4">
    <source>
    </source>
</evidence>
<evidence type="ECO:0000305" key="5"/>
<evidence type="ECO:0000312" key="6">
    <source>
        <dbReference type="EMBL" id="EDP09661.1"/>
    </source>
</evidence>
<evidence type="ECO:0000312" key="7">
    <source>
        <dbReference type="EMBL" id="PNW88157.1"/>
    </source>
</evidence>
<dbReference type="EMBL" id="DS496108">
    <property type="protein sequence ID" value="EDP09661.1"/>
    <property type="molecule type" value="Genomic_DNA"/>
</dbReference>
<dbReference type="EMBL" id="CM008962">
    <property type="protein sequence ID" value="PNW88157.1"/>
    <property type="molecule type" value="Genomic_DNA"/>
</dbReference>
<dbReference type="RefSeq" id="XP_001689923.1">
    <property type="nucleotide sequence ID" value="XM_001689871.1"/>
</dbReference>
<dbReference type="SMR" id="A8HPM5"/>
<dbReference type="FunCoup" id="A8HPM5">
    <property type="interactions" value="647"/>
</dbReference>
<dbReference type="STRING" id="3055.A8HPM5"/>
<dbReference type="PaxDb" id="3055-EDP09661"/>
<dbReference type="EnsemblPlants" id="PNW88157">
    <property type="protein sequence ID" value="PNW88157"/>
    <property type="gene ID" value="CHLRE_01g016750v5"/>
</dbReference>
<dbReference type="GeneID" id="5715134"/>
<dbReference type="Gramene" id="PNW88157">
    <property type="protein sequence ID" value="PNW88157"/>
    <property type="gene ID" value="CHLRE_01g016750v5"/>
</dbReference>
<dbReference type="KEGG" id="cre:CHLRE_01g016750v5"/>
<dbReference type="eggNOG" id="ENOG502QTMT">
    <property type="taxonomic scope" value="Eukaryota"/>
</dbReference>
<dbReference type="HOGENOM" id="CLU_1134921_0_0_1"/>
<dbReference type="InParanoid" id="A8HPM5"/>
<dbReference type="OMA" id="PHDINTK"/>
<dbReference type="OrthoDB" id="48883at2759"/>
<dbReference type="Proteomes" id="UP000006906">
    <property type="component" value="Chromosome 1"/>
</dbReference>
<dbReference type="GO" id="GO:0009535">
    <property type="term" value="C:chloroplast thylakoid membrane"/>
    <property type="evidence" value="ECO:0000318"/>
    <property type="project" value="GO_Central"/>
</dbReference>
<dbReference type="GO" id="GO:0009523">
    <property type="term" value="C:photosystem II"/>
    <property type="evidence" value="ECO:0007669"/>
    <property type="project" value="UniProtKB-KW"/>
</dbReference>
<dbReference type="GO" id="GO:0010196">
    <property type="term" value="P:nonphotochemical quenching"/>
    <property type="evidence" value="ECO:0000315"/>
    <property type="project" value="UniProtKB"/>
</dbReference>
<dbReference type="GO" id="GO:0015979">
    <property type="term" value="P:photosynthesis"/>
    <property type="evidence" value="ECO:0007669"/>
    <property type="project" value="UniProtKB-KW"/>
</dbReference>
<dbReference type="FunFam" id="1.10.3460.10:FF:000018">
    <property type="entry name" value="Photosystem II 22kDa chloroplast protein"/>
    <property type="match status" value="1"/>
</dbReference>
<dbReference type="Gene3D" id="1.10.3460.10">
    <property type="entry name" value="Chlorophyll a/b binding protein domain"/>
    <property type="match status" value="1"/>
</dbReference>
<dbReference type="PANTHER" id="PTHR14154">
    <property type="entry name" value="UPF0041 BRAIN PROTEIN 44-RELATED"/>
    <property type="match status" value="1"/>
</dbReference>
<dbReference type="SUPFAM" id="SSF103511">
    <property type="entry name" value="Chlorophyll a-b binding protein"/>
    <property type="match status" value="2"/>
</dbReference>